<keyword id="KW-0903">Direct protein sequencing</keyword>
<keyword id="KW-0408">Iron</keyword>
<keyword id="KW-0560">Oxidoreductase</keyword>
<sequence length="122" mass="13152">XTAVQTLDISPVGRVEGDLDSXSILEYFRNAILARFGGGLGKYAPFTGTNYEIGVTISGDKDPQAGLVVTPRESTTXGLNEPFYIKPYVSXGYIPHEDGALAHXIEVDGVVVEAYTQAELFR</sequence>
<comment type="catalytic activity">
    <reaction>
        <text>2 Fe(III)-[cytochrome c3] + H2 = 2 Fe(II)-[cytochrome c3] + 2 H(+)</text>
        <dbReference type="Rhea" id="RHEA:20625"/>
        <dbReference type="Rhea" id="RHEA-COMP:11576"/>
        <dbReference type="Rhea" id="RHEA-COMP:11577"/>
        <dbReference type="ChEBI" id="CHEBI:15378"/>
        <dbReference type="ChEBI" id="CHEBI:18276"/>
        <dbReference type="ChEBI" id="CHEBI:29033"/>
        <dbReference type="ChEBI" id="CHEBI:29034"/>
        <dbReference type="EC" id="1.12.2.1"/>
    </reaction>
</comment>
<comment type="cofactor">
    <cofactor>
        <name>Fe cation</name>
        <dbReference type="ChEBI" id="CHEBI:24875"/>
    </cofactor>
</comment>
<comment type="caution">
    <text evidence="1">The order of the peptides shown is uncertain. It is also unknown if gaps exist between the peptides.</text>
</comment>
<dbReference type="EC" id="1.12.2.1"/>
<dbReference type="GO" id="GO:0047806">
    <property type="term" value="F:cytochrome-c3 hydrogenase activity"/>
    <property type="evidence" value="ECO:0007669"/>
    <property type="project" value="UniProtKB-EC"/>
</dbReference>
<name>HC3L_ACIFR</name>
<organism>
    <name type="scientific">Acidithiobacillus ferrooxidans</name>
    <name type="common">Thiobacillus ferrooxidans</name>
    <dbReference type="NCBI Taxonomy" id="920"/>
    <lineage>
        <taxon>Bacteria</taxon>
        <taxon>Pseudomonadati</taxon>
        <taxon>Pseudomonadota</taxon>
        <taxon>Acidithiobacillia</taxon>
        <taxon>Acidithiobacillales</taxon>
        <taxon>Acidithiobacillaceae</taxon>
        <taxon>Acidithiobacillus</taxon>
    </lineage>
</organism>
<evidence type="ECO:0000305" key="1"/>
<feature type="chain" id="PRO_0000083913" description="Cytochrome c3 hydrogenase large chain">
    <location>
        <begin position="1"/>
        <end position="122" status="greater than"/>
    </location>
</feature>
<feature type="non-consecutive residues" evidence="1">
    <location>
        <begin position="20"/>
        <end position="21"/>
    </location>
</feature>
<feature type="non-consecutive residues" evidence="1">
    <location>
        <begin position="29"/>
        <end position="30"/>
    </location>
</feature>
<feature type="non-consecutive residues" evidence="1">
    <location>
        <begin position="35"/>
        <end position="36"/>
    </location>
</feature>
<feature type="non-consecutive residues" evidence="1">
    <location>
        <begin position="42"/>
        <end position="43"/>
    </location>
</feature>
<feature type="non-consecutive residues" evidence="1">
    <location>
        <begin position="59"/>
        <end position="60"/>
    </location>
</feature>
<feature type="non-consecutive residues" evidence="1">
    <location>
        <begin position="72"/>
        <end position="73"/>
    </location>
</feature>
<feature type="non-consecutive residues" evidence="1">
    <location>
        <begin position="78"/>
        <end position="79"/>
    </location>
</feature>
<feature type="non-consecutive residues" evidence="1">
    <location>
        <begin position="87"/>
        <end position="88"/>
    </location>
</feature>
<feature type="non-consecutive residues" evidence="1">
    <location>
        <begin position="98"/>
        <end position="99"/>
    </location>
</feature>
<feature type="non-consecutive residues" evidence="1">
    <location>
        <begin position="107"/>
        <end position="108"/>
    </location>
</feature>
<feature type="non-terminal residue">
    <location>
        <position position="122"/>
    </location>
</feature>
<gene>
    <name type="primary">hoxG</name>
</gene>
<protein>
    <recommendedName>
        <fullName>Cytochrome c3 hydrogenase large chain</fullName>
        <shortName>Hydrogenase</shortName>
        <ecNumber>1.12.2.1</ecNumber>
    </recommendedName>
</protein>
<reference key="1">
    <citation type="journal article" date="1996" name="Arch. Microbiol.">
        <title>Purification and characterization of the hydrogenase from Thiobacillus ferrooxidans.</title>
        <authorList>
            <person name="Fischer J."/>
            <person name="Quentmeier A."/>
            <person name="Kostka S."/>
            <person name="Kraft R."/>
            <person name="Friedrich C.G."/>
        </authorList>
    </citation>
    <scope>PROTEIN SEQUENCE</scope>
    <source>
        <strain>ATCC 19859 / BCRC 13033 / JCM 3863 / NCIMB 9490</strain>
    </source>
</reference>
<accession>P80509</accession>
<proteinExistence type="evidence at protein level"/>